<accession>E7D082</accession>
<comment type="function">
    <text evidence="2 3">Alpha toxins bind voltage-independently at site-3 of sodium channels (Nav) and inhibit the inactivation of the activated channels, thereby blocking neuronal transmission. This toxin inhibits inactivation of Nav1.6/SCN8A (EC(50)=790 nM) and drosophila DmNav1 (EC(50)=280 nM) (PubMed:21969612, Ref.2). The toxin (1 uM) does not significantly shift the midpoint of activation at the two channels, but induces a significant depolarizing shift in the V(1/2) of inactivation of the channels (PubMed:21969612). Has antimicrobial activity (Ref.2).</text>
</comment>
<comment type="subcellular location">
    <subcellularLocation>
        <location evidence="2 3">Secreted</location>
    </subcellularLocation>
</comment>
<comment type="tissue specificity">
    <text evidence="6 7">Expressed by the venom gland.</text>
</comment>
<comment type="domain">
    <text evidence="5">Has the structural arrangement of an alpha-helix connected to antiparallel beta-sheets by disulfide bonds (CS-alpha/beta).</text>
</comment>
<comment type="mass spectrometry" mass="7170.47" method="MALDI" evidence="2"/>
<comment type="miscellaneous">
    <text evidence="2">Negative results: shows no effect on Nav1.2/SCN2A and Nav1.8/SCN10A (PubMed:21969612). Shows a weak inhibition of inactivation on Nav1.3/SCN3A, Nav1.4/SCN4A, Nav1.5/SCN5A, and Nav1.7/SCN9A.</text>
</comment>
<comment type="similarity">
    <text evidence="5">Belongs to the long (4 C-C) scorpion toxin superfamily. Sodium channel inhibitor family. Alpha subfamily.</text>
</comment>
<comment type="caution">
    <text evidence="5">Several genes are coding for this toxin for which the structure by NMR has been determined. The cross-references to PDB and additional information can be found in entry AC P86405.</text>
</comment>
<proteinExistence type="evidence at protein level"/>
<name>SCX5B_MESEU</name>
<feature type="signal peptide" evidence="2 3">
    <location>
        <begin position="1"/>
        <end position="19"/>
    </location>
</feature>
<feature type="chain" id="PRO_5007654375" description="Sodium channel neurotoxin MeuNaTxalpha-5*" evidence="3">
    <location>
        <begin position="20"/>
        <end position="85"/>
    </location>
</feature>
<feature type="propeptide" id="PRO_0000447446" description="Removed by a carboxypeptidase" evidence="5">
    <location>
        <begin position="86"/>
        <end position="87"/>
    </location>
</feature>
<feature type="domain" description="LCN-type CS-alpha/beta" evidence="1">
    <location>
        <begin position="21"/>
        <end position="85"/>
    </location>
</feature>
<feature type="disulfide bond" evidence="2">
    <location>
        <begin position="31"/>
        <end position="84"/>
    </location>
</feature>
<feature type="disulfide bond" evidence="2">
    <location>
        <begin position="35"/>
        <end position="57"/>
    </location>
</feature>
<feature type="disulfide bond" evidence="2">
    <location>
        <begin position="43"/>
        <end position="67"/>
    </location>
</feature>
<feature type="disulfide bond" evidence="2">
    <location>
        <begin position="47"/>
        <end position="69"/>
    </location>
</feature>
<protein>
    <recommendedName>
        <fullName evidence="4">Sodium channel neurotoxin MeuNaTxalpha-5*</fullName>
    </recommendedName>
    <alternativeName>
        <fullName evidence="8 9">MeuNaTxalpha-5b</fullName>
    </alternativeName>
</protein>
<reference key="1">
    <citation type="journal article" date="2012" name="Mol. Cell. Proteomics">
        <title>Evolutionary diversification of Mesobuthus alpha-scorpion toxins affecting sodium channels.</title>
        <authorList>
            <person name="Zhu S."/>
            <person name="Peigneur S."/>
            <person name="Gao B."/>
            <person name="Lu X."/>
            <person name="Cao C."/>
            <person name="Tytgat J."/>
        </authorList>
    </citation>
    <scope>NUCLEOTIDE SEQUENCE [GENOMIC DNA / MRNA]</scope>
    <scope>PROTEIN SEQUENCE OF 20-39</scope>
    <scope>STRUCTURE BY NMR OF 20-85</scope>
    <scope>FUNCTION</scope>
    <scope>SUBCELLULAR LOCATION</scope>
    <scope>MASS SPECTROMETRY</scope>
    <source>
        <tissue>Venom</tissue>
        <tissue>Venom gland</tissue>
    </source>
</reference>
<reference key="2">
    <citation type="submission" date="2009-11" db="UniProtKB">
        <title>Characterization of a sodium channel toxin from the scorpion Mesobuthus eupeus venom.</title>
        <authorList>
            <person name="Zhu S.Y."/>
            <person name="Gao B."/>
        </authorList>
    </citation>
    <scope>PROTEIN SEQUENCE OF 20-85</scope>
    <scope>FUNCTION</scope>
    <scope>SUBCELLULAR LOCATION</scope>
    <scope>MASS SPECTROMETRY</scope>
    <source>
        <tissue>Venom</tissue>
    </source>
</reference>
<keyword id="KW-0929">Antimicrobial</keyword>
<keyword id="KW-0903">Direct protein sequencing</keyword>
<keyword id="KW-1015">Disulfide bond</keyword>
<keyword id="KW-0872">Ion channel impairing toxin</keyword>
<keyword id="KW-0528">Neurotoxin</keyword>
<keyword id="KW-0964">Secreted</keyword>
<keyword id="KW-0732">Signal</keyword>
<keyword id="KW-0800">Toxin</keyword>
<keyword id="KW-0738">Voltage-gated sodium channel impairing toxin</keyword>
<dbReference type="EMBL" id="HM992828">
    <property type="protein sequence ID" value="ADU05410.1"/>
    <property type="molecule type" value="Genomic_DNA"/>
</dbReference>
<dbReference type="EMBL" id="HQ170506">
    <property type="protein sequence ID" value="AEM44794.1"/>
    <property type="molecule type" value="mRNA"/>
</dbReference>
<dbReference type="SMR" id="E7D082"/>
<dbReference type="GO" id="GO:0005576">
    <property type="term" value="C:extracellular region"/>
    <property type="evidence" value="ECO:0007669"/>
    <property type="project" value="UniProtKB-SubCell"/>
</dbReference>
<dbReference type="GO" id="GO:0019871">
    <property type="term" value="F:sodium channel inhibitor activity"/>
    <property type="evidence" value="ECO:0007669"/>
    <property type="project" value="InterPro"/>
</dbReference>
<dbReference type="GO" id="GO:0090729">
    <property type="term" value="F:toxin activity"/>
    <property type="evidence" value="ECO:0007669"/>
    <property type="project" value="UniProtKB-KW"/>
</dbReference>
<dbReference type="GO" id="GO:0006952">
    <property type="term" value="P:defense response"/>
    <property type="evidence" value="ECO:0007669"/>
    <property type="project" value="InterPro"/>
</dbReference>
<dbReference type="CDD" id="cd23106">
    <property type="entry name" value="neurotoxins_LC_scorpion"/>
    <property type="match status" value="1"/>
</dbReference>
<dbReference type="FunFam" id="3.30.30.10:FF:000002">
    <property type="entry name" value="Alpha-like toxin BmK-M1"/>
    <property type="match status" value="1"/>
</dbReference>
<dbReference type="Gene3D" id="3.30.30.10">
    <property type="entry name" value="Knottin, scorpion toxin-like"/>
    <property type="match status" value="1"/>
</dbReference>
<dbReference type="InterPro" id="IPR044062">
    <property type="entry name" value="LCN-type_CS_alpha_beta_dom"/>
</dbReference>
<dbReference type="InterPro" id="IPR003614">
    <property type="entry name" value="Scorpion_toxin-like"/>
</dbReference>
<dbReference type="InterPro" id="IPR036574">
    <property type="entry name" value="Scorpion_toxin-like_sf"/>
</dbReference>
<dbReference type="InterPro" id="IPR018218">
    <property type="entry name" value="Scorpion_toxinL"/>
</dbReference>
<dbReference type="InterPro" id="IPR002061">
    <property type="entry name" value="Scorpion_toxinL/defensin"/>
</dbReference>
<dbReference type="Pfam" id="PF00537">
    <property type="entry name" value="Toxin_3"/>
    <property type="match status" value="1"/>
</dbReference>
<dbReference type="PRINTS" id="PR00285">
    <property type="entry name" value="SCORPNTOXIN"/>
</dbReference>
<dbReference type="SMART" id="SM00505">
    <property type="entry name" value="Knot1"/>
    <property type="match status" value="1"/>
</dbReference>
<dbReference type="SUPFAM" id="SSF57095">
    <property type="entry name" value="Scorpion toxin-like"/>
    <property type="match status" value="1"/>
</dbReference>
<dbReference type="PROSITE" id="PS51863">
    <property type="entry name" value="LCN_CSAB"/>
    <property type="match status" value="1"/>
</dbReference>
<organism>
    <name type="scientific">Mesobuthus eupeus</name>
    <name type="common">Lesser Asian scorpion</name>
    <name type="synonym">Buthus eupeus</name>
    <dbReference type="NCBI Taxonomy" id="34648"/>
    <lineage>
        <taxon>Eukaryota</taxon>
        <taxon>Metazoa</taxon>
        <taxon>Ecdysozoa</taxon>
        <taxon>Arthropoda</taxon>
        <taxon>Chelicerata</taxon>
        <taxon>Arachnida</taxon>
        <taxon>Scorpiones</taxon>
        <taxon>Buthida</taxon>
        <taxon>Buthoidea</taxon>
        <taxon>Buthidae</taxon>
        <taxon>Mesobuthus</taxon>
    </lineage>
</organism>
<sequence length="87" mass="9570">MNYLILISFALLVITGVESARDAYIAKPHNCVYECFDAFSSYCNGVCTKNGAKSGYCQILGTYGNGCWCIALPDNVPIRIPGKCHRR</sequence>
<evidence type="ECO:0000255" key="1">
    <source>
        <dbReference type="PROSITE-ProRule" id="PRU01210"/>
    </source>
</evidence>
<evidence type="ECO:0000269" key="2">
    <source>
    </source>
</evidence>
<evidence type="ECO:0000269" key="3">
    <source ref="2"/>
</evidence>
<evidence type="ECO:0000303" key="4">
    <source>
    </source>
</evidence>
<evidence type="ECO:0000305" key="5"/>
<evidence type="ECO:0000305" key="6">
    <source>
    </source>
</evidence>
<evidence type="ECO:0000305" key="7">
    <source ref="2"/>
</evidence>
<evidence type="ECO:0000312" key="8">
    <source>
        <dbReference type="EMBL" id="ADU05410.1"/>
    </source>
</evidence>
<evidence type="ECO:0000312" key="9">
    <source>
        <dbReference type="EMBL" id="AEM44794.1"/>
    </source>
</evidence>